<comment type="function">
    <text>Nonribosomal peptide synthesis (NRPS) is a key mechanism responsible for the biosynthesis of bioactive metabolites which are potentially contributing to organismal virulence.</text>
</comment>
<comment type="domain">
    <text evidence="3">NRP synthetases are composed of discrete domains (adenylation (A), thiolation (T) or peptidyl carrier protein (PCP) and condensation (C) domains) which when grouped together are referred to as a single module. Each module is responsible for the recognition (via the A domain) and incorporation of a single amino acid into the growing peptide product. Thus, an NRP synthetase is generally composed of one or more modules and can terminate in a thioesterase domain (TE) that releases the newly synthesized peptide from the enzyme. Occasionally, epimerase (E) domains (responsible for l- to d- amino acid conversion) are present within the NRP synthetase. NRPS5 has the following architecture: A-T-C-A-T-C-T.</text>
</comment>
<comment type="similarity">
    <text evidence="4">Belongs to the NRP synthetase family.</text>
</comment>
<proteinExistence type="inferred from homology"/>
<reference key="1">
    <citation type="journal article" date="2005" name="Nature">
        <title>Genomic sequence of the pathogenic and allergenic filamentous fungus Aspergillus fumigatus.</title>
        <authorList>
            <person name="Nierman W.C."/>
            <person name="Pain A."/>
            <person name="Anderson M.J."/>
            <person name="Wortman J.R."/>
            <person name="Kim H.S."/>
            <person name="Arroyo J."/>
            <person name="Berriman M."/>
            <person name="Abe K."/>
            <person name="Archer D.B."/>
            <person name="Bermejo C."/>
            <person name="Bennett J.W."/>
            <person name="Bowyer P."/>
            <person name="Chen D."/>
            <person name="Collins M."/>
            <person name="Coulsen R."/>
            <person name="Davies R."/>
            <person name="Dyer P.S."/>
            <person name="Farman M.L."/>
            <person name="Fedorova N."/>
            <person name="Fedorova N.D."/>
            <person name="Feldblyum T.V."/>
            <person name="Fischer R."/>
            <person name="Fosker N."/>
            <person name="Fraser A."/>
            <person name="Garcia J.L."/>
            <person name="Garcia M.J."/>
            <person name="Goble A."/>
            <person name="Goldman G.H."/>
            <person name="Gomi K."/>
            <person name="Griffith-Jones S."/>
            <person name="Gwilliam R."/>
            <person name="Haas B.J."/>
            <person name="Haas H."/>
            <person name="Harris D.E."/>
            <person name="Horiuchi H."/>
            <person name="Huang J."/>
            <person name="Humphray S."/>
            <person name="Jimenez J."/>
            <person name="Keller N."/>
            <person name="Khouri H."/>
            <person name="Kitamoto K."/>
            <person name="Kobayashi T."/>
            <person name="Konzack S."/>
            <person name="Kulkarni R."/>
            <person name="Kumagai T."/>
            <person name="Lafton A."/>
            <person name="Latge J.-P."/>
            <person name="Li W."/>
            <person name="Lord A."/>
            <person name="Lu C."/>
            <person name="Majoros W.H."/>
            <person name="May G.S."/>
            <person name="Miller B.L."/>
            <person name="Mohamoud Y."/>
            <person name="Molina M."/>
            <person name="Monod M."/>
            <person name="Mouyna I."/>
            <person name="Mulligan S."/>
            <person name="Murphy L.D."/>
            <person name="O'Neil S."/>
            <person name="Paulsen I."/>
            <person name="Penalva M.A."/>
            <person name="Pertea M."/>
            <person name="Price C."/>
            <person name="Pritchard B.L."/>
            <person name="Quail M.A."/>
            <person name="Rabbinowitsch E."/>
            <person name="Rawlins N."/>
            <person name="Rajandream M.A."/>
            <person name="Reichard U."/>
            <person name="Renauld H."/>
            <person name="Robson G.D."/>
            <person name="Rodriguez de Cordoba S."/>
            <person name="Rodriguez-Pena J.M."/>
            <person name="Ronning C.M."/>
            <person name="Rutter S."/>
            <person name="Salzberg S.L."/>
            <person name="Sanchez M."/>
            <person name="Sanchez-Ferrero J.C."/>
            <person name="Saunders D."/>
            <person name="Seeger K."/>
            <person name="Squares R."/>
            <person name="Squares S."/>
            <person name="Takeuchi M."/>
            <person name="Tekaia F."/>
            <person name="Turner G."/>
            <person name="Vazquez de Aldana C.R."/>
            <person name="Weidman J."/>
            <person name="White O."/>
            <person name="Woodward J.R."/>
            <person name="Yu J.-H."/>
            <person name="Fraser C.M."/>
            <person name="Galagan J.E."/>
            <person name="Asai K."/>
            <person name="Machida M."/>
            <person name="Hall N."/>
            <person name="Barrell B.G."/>
            <person name="Denning D.W."/>
        </authorList>
    </citation>
    <scope>NUCLEOTIDE SEQUENCE [LARGE SCALE GENOMIC DNA]</scope>
    <source>
        <strain>ATCC MYA-4609 / CBS 101355 / FGSC A1100 / Af293</strain>
    </source>
</reference>
<reference key="2">
    <citation type="journal article" date="2006" name="Gene">
        <title>Phylogenomic analysis of non-ribosomal peptide synthetases in the genus Aspergillus.</title>
        <authorList>
            <person name="Cramer R.A. Jr."/>
            <person name="Stajich J.E."/>
            <person name="Yamanaka Y."/>
            <person name="Dietrich F.S."/>
            <person name="Steinbach W.J."/>
            <person name="Perfect J.R."/>
        </authorList>
    </citation>
    <scope>NOMENCLATURE</scope>
</reference>
<reference key="3">
    <citation type="journal article" date="2007" name="Microbiology">
        <title>Nonribosomal peptide synthesis in Aspergillus fumigatus and other fungi.</title>
        <authorList>
            <person name="Stack D."/>
            <person name="Neville C."/>
            <person name="Doyle S."/>
        </authorList>
    </citation>
    <scope>REVIEW ON FUNCTION</scope>
    <scope>DOMAIN</scope>
</reference>
<organism>
    <name type="scientific">Aspergillus fumigatus (strain ATCC MYA-4609 / CBS 101355 / FGSC A1100 / Af293)</name>
    <name type="common">Neosartorya fumigata</name>
    <dbReference type="NCBI Taxonomy" id="330879"/>
    <lineage>
        <taxon>Eukaryota</taxon>
        <taxon>Fungi</taxon>
        <taxon>Dikarya</taxon>
        <taxon>Ascomycota</taxon>
        <taxon>Pezizomycotina</taxon>
        <taxon>Eurotiomycetes</taxon>
        <taxon>Eurotiomycetidae</taxon>
        <taxon>Eurotiales</taxon>
        <taxon>Aspergillaceae</taxon>
        <taxon>Aspergillus</taxon>
        <taxon>Aspergillus subgen. Fumigati</taxon>
    </lineage>
</organism>
<feature type="chain" id="PRO_0000416546" description="Nonribosomal peptide synthetase 5">
    <location>
        <begin position="1"/>
        <end position="2202"/>
    </location>
</feature>
<feature type="domain" description="Carrier 1" evidence="1">
    <location>
        <begin position="517"/>
        <end position="593"/>
    </location>
</feature>
<feature type="domain" description="Carrier 2" evidence="1">
    <location>
        <begin position="1563"/>
        <end position="1643"/>
    </location>
</feature>
<feature type="domain" description="Carrier 3" evidence="1">
    <location>
        <begin position="2130"/>
        <end position="2202"/>
    </location>
</feature>
<feature type="region of interest" description="Adenylation 1">
    <location>
        <begin position="58"/>
        <end position="443"/>
    </location>
</feature>
<feature type="region of interest" description="Condensation 1">
    <location>
        <begin position="625"/>
        <end position="918"/>
    </location>
</feature>
<feature type="region of interest" description="Adenylation 2">
    <location>
        <begin position="1105"/>
        <end position="1482"/>
    </location>
</feature>
<feature type="region of interest" description="Condensation 2">
    <location>
        <begin position="1664"/>
        <end position="1952"/>
    </location>
</feature>
<feature type="region of interest" description="Disordered" evidence="2">
    <location>
        <begin position="2103"/>
        <end position="2129"/>
    </location>
</feature>
<feature type="compositionally biased region" description="Polar residues" evidence="2">
    <location>
        <begin position="2115"/>
        <end position="2129"/>
    </location>
</feature>
<feature type="modified residue" description="O-(pantetheine 4'-phosphoryl)serine" evidence="1">
    <location>
        <position position="554"/>
    </location>
</feature>
<feature type="modified residue" description="O-(pantetheine 4'-phosphoryl)serine" evidence="1">
    <location>
        <position position="1602"/>
    </location>
</feature>
<feature type="modified residue" description="O-(pantetheine 4'-phosphoryl)serine" evidence="1">
    <location>
        <position position="2164"/>
    </location>
</feature>
<protein>
    <recommendedName>
        <fullName>Nonribosomal peptide synthetase 5</fullName>
        <ecNumber>6.3.2.-</ecNumber>
    </recommendedName>
</protein>
<accession>Q4WYG2</accession>
<keyword id="KW-0436">Ligase</keyword>
<keyword id="KW-0596">Phosphopantetheine</keyword>
<keyword id="KW-0597">Phosphoprotein</keyword>
<keyword id="KW-1185">Reference proteome</keyword>
<keyword id="KW-0677">Repeat</keyword>
<keyword id="KW-0843">Virulence</keyword>
<evidence type="ECO:0000255" key="1">
    <source>
        <dbReference type="PROSITE-ProRule" id="PRU00258"/>
    </source>
</evidence>
<evidence type="ECO:0000256" key="2">
    <source>
        <dbReference type="SAM" id="MobiDB-lite"/>
    </source>
</evidence>
<evidence type="ECO:0000269" key="3">
    <source>
    </source>
</evidence>
<evidence type="ECO:0000305" key="4"/>
<sequence length="2202" mass="242170">MNLTLTTTSITIQPSATMANRAPTLLDHFHDQLQKHSSSVAIEDGTQSADQGAWERVTYAQLDALSDSWSKRLRQAGVGAGCIVPLLSKRSVAMVAATLAILKLRAAYVSIDIDSWGKDRIDTVLKTVNPQIIVSTSPCPKDHYPYPVVALERNDFDETVTSNGTQWTRNDEDSIDRGNDLAYIIFTSGTTGIPKGVKIGQRSISRYVKEGGDLPFNFNTTHGTRVLLICSIAFDVCAGVMFNTLCNGGTLVLADPSTFETAAKTCHVLPLTPSILVTLDPKAGFDTVEKIFLGGESPSPSLIEAWSSPRRRLYNAYGPTETTCTAFMGELLPGSPITIGYPISYSTVTLLDEDGMESVEGEICIAGLGLALGYFHDPERTNSAFVEWNGVRIYKTGDYGRRTKHGLQFCGRRDSVVKNRGFLINLEADVEPALLSYDKVDSASAFMSQGQLIAFVTPTSAKEGLREYLANTVSSFLVPDTIYSLDEFPRTSNGKVDRRSLMRMHELEQGSDTASLERGLGAVESVRRGLSHVLRLPESQILPASSFRHLGGHSLAAVMLVSVLRRMGFGISVAEVLLLDTVENIAAAVVELSDIPHALSAQEDLIERLRHDISTTRPLDEGVTIAPMTDMQTRLLGASVATPGLSFIKTSFTLDHPEKEDLTSTLRAAWVRLHQTHEILRTAFVLTASNGTQIISQEPDFSWKEKFVTESEWESVCRREEHLDVADFPDFDAENRASLSRVVLIIAPRRRTRFVWTVHHSLIDGWSMATLMRDFASCLDGKPIPAPPQFAQVAQAIGQLKAESSDRAVSFWKEYLDGYTPAQRLRVSPPSDVSDYTQAALSRKLTVSVSALEDAARDRFAVTPATLLYAAWGLLLSRYSGTDRAALGAVLSGRSLPIPGVENIIGPLINTLPLAINTQEAQSTYSFVQSVFRRLCDILEFQWSPVALIQEGCGCNPSELFETLFALQYDFPQTPWKSSEVPEPRDIRYEEATQVPLTVLLDNANGQFEVRFIYRRSHFGDATVQRMIGQFGNLLENLIAAQPDTDLSNVTGQMFNNRVYEMSIAKPGQPVSACKVPESLTEAIENSIQAHPDIYAVEGLTGRLTYREFGRMTEHISQRLLQHIQPGSVACMISDGSLLWLLAMVAIIRAGAIYCPVDEKLPRDRKDYMVRNSRAALILYANSSQEPLCNGVPSLNMESIMQEISSSSGSPIATSRNRPSGDTVACLVYTSGSTGLPKAVQLQHKGILNVISQPEGRLYSRPGQRNAQMLSLGFDCCIKEVFSTICFGATLVLKDPENPISHLARVDATMATPSLLATLEPTDYPNLKVITVAGEAVSQVLNDKWAAGRTLINGYGPAECTLISTTAILHPGNRVSIGKPLPGLSCYLLDSNKRPVPMGVSGEIYISGVQVTPGYLHNEQETSKRFLSDSFNPGQVMYRTGDIGRMLEDGNIEYIGREDNQIKLRGFRIDLGEVQSTISKLASTASNVALIVSNGNLVAFMTPETIDVRSLAKSLETQLPQYAVPNRIIALATLPTSANNKVDSSALQRYLRDHGKDGAVVEDLETDTQRVLAVIWADMLGRDLNQTPISPSDRFFELGGHSLLQIKVAQAISKRWNIRPLPLKQVIRHHSLQDLSLAIDELVSDPRTVSTMPFLEMTPVARNGQLPLSYLEKEMLLNHLISGGSPAGNMNFVCKIRGDINAETLADAFQRVTADVEVFRTRYSVIEGTLFRQQAPGSVKVPRVVQTGNLSSFVHGRITKSFDLSTEPPVDVSIIIGTPMQAMLVVVMSHVVGDAATMATYLNRVSRTYDLLRSNSQTTNTSTVPDNLTYIDWAHWASTLQPNPRALTFWSSYLSNPPSPLTFGNPSPAPATYIGLTRSWTLPPSMYRKLSDLAAKASVTMHQLILAAVFFSLQCVDRRDDILVAAPFTHRTEPGTESLPGLFLDRLLLRIQRSPHQSSIFDFLSSVRETSQQALAHVIPFHTLRHSLAHKPSLIDPLFKVMVTYHTAADQRPLLDLSGAEVQPIPWRHTGGSKFPLKFEFTEMATQDLEVDMEYDLGCIREDIALRLEFALSFALQLMVLERETDDIIQLVQMSFCPGEGSPVGLTPSHEGSAELTNGTNKTDSTTGQQELENNLTDVVCECLGLEIQDVDADKSFWDLGAQSMDALKLQHLCEKRGVRVRLRDIFVSRSLLELATCAVII</sequence>
<name>NRPS5_ASPFU</name>
<dbReference type="EC" id="6.3.2.-"/>
<dbReference type="EMBL" id="AAHF01000002">
    <property type="protein sequence ID" value="EAL92291.2"/>
    <property type="molecule type" value="Genomic_DNA"/>
</dbReference>
<dbReference type="RefSeq" id="XP_754329.2">
    <property type="nucleotide sequence ID" value="XM_749236.2"/>
</dbReference>
<dbReference type="SMR" id="Q4WYG2"/>
<dbReference type="STRING" id="330879.Q4WYG2"/>
<dbReference type="EnsemblFungi" id="EAL92291">
    <property type="protein sequence ID" value="EAL92291"/>
    <property type="gene ID" value="AFUA_3G12920"/>
</dbReference>
<dbReference type="GeneID" id="3512626"/>
<dbReference type="KEGG" id="afm:AFUA_3G12920"/>
<dbReference type="VEuPathDB" id="FungiDB:Afu3g12920"/>
<dbReference type="eggNOG" id="KOG1178">
    <property type="taxonomic scope" value="Eukaryota"/>
</dbReference>
<dbReference type="HOGENOM" id="CLU_000022_0_5_1"/>
<dbReference type="InParanoid" id="Q4WYG2"/>
<dbReference type="OMA" id="CCIKEVF"/>
<dbReference type="OrthoDB" id="416786at2759"/>
<dbReference type="Proteomes" id="UP000002530">
    <property type="component" value="Chromosome 3"/>
</dbReference>
<dbReference type="GO" id="GO:0005737">
    <property type="term" value="C:cytoplasm"/>
    <property type="evidence" value="ECO:0000318"/>
    <property type="project" value="GO_Central"/>
</dbReference>
<dbReference type="GO" id="GO:0016874">
    <property type="term" value="F:ligase activity"/>
    <property type="evidence" value="ECO:0007669"/>
    <property type="project" value="UniProtKB-KW"/>
</dbReference>
<dbReference type="GO" id="GO:0031177">
    <property type="term" value="F:phosphopantetheine binding"/>
    <property type="evidence" value="ECO:0000318"/>
    <property type="project" value="GO_Central"/>
</dbReference>
<dbReference type="GO" id="GO:0043041">
    <property type="term" value="P:amino acid activation for nonribosomal peptide biosynthetic process"/>
    <property type="evidence" value="ECO:0000318"/>
    <property type="project" value="GO_Central"/>
</dbReference>
<dbReference type="GO" id="GO:0019184">
    <property type="term" value="P:nonribosomal peptide biosynthetic process"/>
    <property type="evidence" value="ECO:0000255"/>
    <property type="project" value="AspGD"/>
</dbReference>
<dbReference type="GO" id="GO:0019748">
    <property type="term" value="P:secondary metabolic process"/>
    <property type="evidence" value="ECO:0000303"/>
    <property type="project" value="AspGD"/>
</dbReference>
<dbReference type="GO" id="GO:0044550">
    <property type="term" value="P:secondary metabolite biosynthetic process"/>
    <property type="evidence" value="ECO:0000315"/>
    <property type="project" value="AspGD"/>
</dbReference>
<dbReference type="CDD" id="cd17653">
    <property type="entry name" value="A_NRPS_GliP_like"/>
    <property type="match status" value="2"/>
</dbReference>
<dbReference type="CDD" id="cd19537">
    <property type="entry name" value="C_NRPS-like"/>
    <property type="match status" value="1"/>
</dbReference>
<dbReference type="CDD" id="cd19545">
    <property type="entry name" value="FUM14_C_NRPS-like"/>
    <property type="match status" value="1"/>
</dbReference>
<dbReference type="FunFam" id="3.30.559.30:FF:000031">
    <property type="entry name" value="Nonribosomal peptide synthase GliP2"/>
    <property type="match status" value="1"/>
</dbReference>
<dbReference type="FunFam" id="3.40.50.12780:FF:000062">
    <property type="entry name" value="Nonribosomal peptide synthetase gliP"/>
    <property type="match status" value="1"/>
</dbReference>
<dbReference type="Gene3D" id="3.30.300.30">
    <property type="match status" value="2"/>
</dbReference>
<dbReference type="Gene3D" id="1.10.1200.10">
    <property type="entry name" value="ACP-like"/>
    <property type="match status" value="3"/>
</dbReference>
<dbReference type="Gene3D" id="3.30.559.10">
    <property type="entry name" value="Chloramphenicol acetyltransferase-like domain"/>
    <property type="match status" value="2"/>
</dbReference>
<dbReference type="Gene3D" id="3.40.50.12780">
    <property type="entry name" value="N-terminal domain of ligase-like"/>
    <property type="match status" value="2"/>
</dbReference>
<dbReference type="Gene3D" id="3.30.559.30">
    <property type="entry name" value="Nonribosomal peptide synthetase, condensation domain"/>
    <property type="match status" value="2"/>
</dbReference>
<dbReference type="InterPro" id="IPR010071">
    <property type="entry name" value="AA_adenyl_dom"/>
</dbReference>
<dbReference type="InterPro" id="IPR036736">
    <property type="entry name" value="ACP-like_sf"/>
</dbReference>
<dbReference type="InterPro" id="IPR045851">
    <property type="entry name" value="AMP-bd_C_sf"/>
</dbReference>
<dbReference type="InterPro" id="IPR020845">
    <property type="entry name" value="AMP-binding_CS"/>
</dbReference>
<dbReference type="InterPro" id="IPR000873">
    <property type="entry name" value="AMP-dep_synth/lig_dom"/>
</dbReference>
<dbReference type="InterPro" id="IPR042099">
    <property type="entry name" value="ANL_N_sf"/>
</dbReference>
<dbReference type="InterPro" id="IPR023213">
    <property type="entry name" value="CAT-like_dom_sf"/>
</dbReference>
<dbReference type="InterPro" id="IPR001242">
    <property type="entry name" value="Condensatn"/>
</dbReference>
<dbReference type="InterPro" id="IPR009081">
    <property type="entry name" value="PP-bd_ACP"/>
</dbReference>
<dbReference type="InterPro" id="IPR006162">
    <property type="entry name" value="Ppantetheine_attach_site"/>
</dbReference>
<dbReference type="NCBIfam" id="TIGR01733">
    <property type="entry name" value="AA-adenyl-dom"/>
    <property type="match status" value="1"/>
</dbReference>
<dbReference type="PANTHER" id="PTHR45527">
    <property type="entry name" value="NONRIBOSOMAL PEPTIDE SYNTHETASE"/>
    <property type="match status" value="1"/>
</dbReference>
<dbReference type="PANTHER" id="PTHR45527:SF11">
    <property type="entry name" value="NONRIBOSOMAL PEPTIDE SYNTHETASE 5"/>
    <property type="match status" value="1"/>
</dbReference>
<dbReference type="Pfam" id="PF00501">
    <property type="entry name" value="AMP-binding"/>
    <property type="match status" value="2"/>
</dbReference>
<dbReference type="Pfam" id="PF00668">
    <property type="entry name" value="Condensation"/>
    <property type="match status" value="2"/>
</dbReference>
<dbReference type="Pfam" id="PF00550">
    <property type="entry name" value="PP-binding"/>
    <property type="match status" value="3"/>
</dbReference>
<dbReference type="SUPFAM" id="SSF56801">
    <property type="entry name" value="Acetyl-CoA synthetase-like"/>
    <property type="match status" value="2"/>
</dbReference>
<dbReference type="SUPFAM" id="SSF47336">
    <property type="entry name" value="ACP-like"/>
    <property type="match status" value="3"/>
</dbReference>
<dbReference type="SUPFAM" id="SSF52777">
    <property type="entry name" value="CoA-dependent acyltransferases"/>
    <property type="match status" value="4"/>
</dbReference>
<dbReference type="PROSITE" id="PS00455">
    <property type="entry name" value="AMP_BINDING"/>
    <property type="match status" value="2"/>
</dbReference>
<dbReference type="PROSITE" id="PS50075">
    <property type="entry name" value="CARRIER"/>
    <property type="match status" value="3"/>
</dbReference>
<dbReference type="PROSITE" id="PS00012">
    <property type="entry name" value="PHOSPHOPANTETHEINE"/>
    <property type="match status" value="1"/>
</dbReference>
<gene>
    <name type="primary">NRPS5</name>
    <name type="synonym">pesF</name>
    <name type="ORF">AFUA_3G12920</name>
</gene>